<gene>
    <name evidence="1" type="primary">yjjB</name>
    <name type="ordered locus">SNSL254_A4900</name>
</gene>
<protein>
    <recommendedName>
        <fullName evidence="1">Probable succinate transporter subunit YjjB</fullName>
    </recommendedName>
</protein>
<comment type="function">
    <text evidence="1">Involved in succinate export with YjjP. Both proteins are required for export.</text>
</comment>
<comment type="subunit">
    <text evidence="1">The transporter is composed of YjjB and YjjP.</text>
</comment>
<comment type="subcellular location">
    <subcellularLocation>
        <location evidence="1">Cell inner membrane</location>
        <topology evidence="1">Multi-pass membrane protein</topology>
    </subcellularLocation>
</comment>
<comment type="similarity">
    <text evidence="1">Belongs to the ThrE exporter (TC 2.A.79) family.</text>
</comment>
<evidence type="ECO:0000255" key="1">
    <source>
        <dbReference type="HAMAP-Rule" id="MF_01191"/>
    </source>
</evidence>
<keyword id="KW-0997">Cell inner membrane</keyword>
<keyword id="KW-1003">Cell membrane</keyword>
<keyword id="KW-0472">Membrane</keyword>
<keyword id="KW-0812">Transmembrane</keyword>
<keyword id="KW-1133">Transmembrane helix</keyword>
<keyword id="KW-0813">Transport</keyword>
<name>YJJB_SALNS</name>
<dbReference type="EMBL" id="CP001113">
    <property type="protein sequence ID" value="ACF64344.1"/>
    <property type="molecule type" value="Genomic_DNA"/>
</dbReference>
<dbReference type="RefSeq" id="WP_000511329.1">
    <property type="nucleotide sequence ID" value="NC_011080.1"/>
</dbReference>
<dbReference type="KEGG" id="see:SNSL254_A4900"/>
<dbReference type="HOGENOM" id="CLU_117642_1_0_6"/>
<dbReference type="Proteomes" id="UP000008824">
    <property type="component" value="Chromosome"/>
</dbReference>
<dbReference type="GO" id="GO:0005886">
    <property type="term" value="C:plasma membrane"/>
    <property type="evidence" value="ECO:0007669"/>
    <property type="project" value="UniProtKB-SubCell"/>
</dbReference>
<dbReference type="GO" id="GO:0015744">
    <property type="term" value="P:succinate transport"/>
    <property type="evidence" value="ECO:0007669"/>
    <property type="project" value="UniProtKB-UniRule"/>
</dbReference>
<dbReference type="HAMAP" id="MF_01191">
    <property type="entry name" value="YjjB"/>
    <property type="match status" value="1"/>
</dbReference>
<dbReference type="InterPro" id="IPR024528">
    <property type="entry name" value="ThrE_2"/>
</dbReference>
<dbReference type="InterPro" id="IPR050539">
    <property type="entry name" value="ThrE_Dicarb/AminoAcid_Exp"/>
</dbReference>
<dbReference type="InterPro" id="IPR020914">
    <property type="entry name" value="YjjB"/>
</dbReference>
<dbReference type="NCBIfam" id="NF007391">
    <property type="entry name" value="PRK09917.1"/>
    <property type="match status" value="1"/>
</dbReference>
<dbReference type="PANTHER" id="PTHR34390:SF1">
    <property type="entry name" value="SUCCINATE TRANSPORTER SUBUNIT YJJB-RELATED"/>
    <property type="match status" value="1"/>
</dbReference>
<dbReference type="PANTHER" id="PTHR34390">
    <property type="entry name" value="UPF0442 PROTEIN YJJB-RELATED"/>
    <property type="match status" value="1"/>
</dbReference>
<dbReference type="Pfam" id="PF12821">
    <property type="entry name" value="ThrE_2"/>
    <property type="match status" value="1"/>
</dbReference>
<accession>B4T4F0</accession>
<reference key="1">
    <citation type="journal article" date="2011" name="J. Bacteriol.">
        <title>Comparative genomics of 28 Salmonella enterica isolates: evidence for CRISPR-mediated adaptive sublineage evolution.</title>
        <authorList>
            <person name="Fricke W.F."/>
            <person name="Mammel M.K."/>
            <person name="McDermott P.F."/>
            <person name="Tartera C."/>
            <person name="White D.G."/>
            <person name="Leclerc J.E."/>
            <person name="Ravel J."/>
            <person name="Cebula T.A."/>
        </authorList>
    </citation>
    <scope>NUCLEOTIDE SEQUENCE [LARGE SCALE GENOMIC DNA]</scope>
    <source>
        <strain>SL254</strain>
    </source>
</reference>
<proteinExistence type="inferred from homology"/>
<organism>
    <name type="scientific">Salmonella newport (strain SL254)</name>
    <dbReference type="NCBI Taxonomy" id="423368"/>
    <lineage>
        <taxon>Bacteria</taxon>
        <taxon>Pseudomonadati</taxon>
        <taxon>Pseudomonadota</taxon>
        <taxon>Gammaproteobacteria</taxon>
        <taxon>Enterobacterales</taxon>
        <taxon>Enterobacteriaceae</taxon>
        <taxon>Salmonella</taxon>
    </lineage>
</organism>
<feature type="chain" id="PRO_1000138374" description="Probable succinate transporter subunit YjjB">
    <location>
        <begin position="1"/>
        <end position="157"/>
    </location>
</feature>
<feature type="transmembrane region" description="Helical" evidence="1">
    <location>
        <begin position="8"/>
        <end position="28"/>
    </location>
</feature>
<feature type="transmembrane region" description="Helical" evidence="1">
    <location>
        <begin position="55"/>
        <end position="75"/>
    </location>
</feature>
<feature type="transmembrane region" description="Helical" evidence="1">
    <location>
        <begin position="87"/>
        <end position="107"/>
    </location>
</feature>
<feature type="transmembrane region" description="Helical" evidence="1">
    <location>
        <begin position="129"/>
        <end position="149"/>
    </location>
</feature>
<sequence>MGIIDFLLALMQDMILSAIPAVGFAMVFNVPHRALPWCALLGALGHGSRMLMMSAGFNIEWSTFMASLLVGSIGIQWSRWYLAHPKVFTVAAVIPMFPGISAYTAMISAVKISHLGYSEPMMITLLTNFLKASSIVGALSIGLSVPGLWLYRKRPRV</sequence>